<gene>
    <name evidence="1" type="primary">fdhD</name>
    <name type="ordered locus">Atu2619</name>
    <name type="ORF">AGR_C_4748</name>
</gene>
<accession>Q8UC79</accession>
<accession>Q7CWM1</accession>
<reference key="1">
    <citation type="journal article" date="2001" name="Science">
        <title>The genome of the natural genetic engineer Agrobacterium tumefaciens C58.</title>
        <authorList>
            <person name="Wood D.W."/>
            <person name="Setubal J.C."/>
            <person name="Kaul R."/>
            <person name="Monks D.E."/>
            <person name="Kitajima J.P."/>
            <person name="Okura V.K."/>
            <person name="Zhou Y."/>
            <person name="Chen L."/>
            <person name="Wood G.E."/>
            <person name="Almeida N.F. Jr."/>
            <person name="Woo L."/>
            <person name="Chen Y."/>
            <person name="Paulsen I.T."/>
            <person name="Eisen J.A."/>
            <person name="Karp P.D."/>
            <person name="Bovee D. Sr."/>
            <person name="Chapman P."/>
            <person name="Clendenning J."/>
            <person name="Deatherage G."/>
            <person name="Gillet W."/>
            <person name="Grant C."/>
            <person name="Kutyavin T."/>
            <person name="Levy R."/>
            <person name="Li M.-J."/>
            <person name="McClelland E."/>
            <person name="Palmieri A."/>
            <person name="Raymond C."/>
            <person name="Rouse G."/>
            <person name="Saenphimmachak C."/>
            <person name="Wu Z."/>
            <person name="Romero P."/>
            <person name="Gordon D."/>
            <person name="Zhang S."/>
            <person name="Yoo H."/>
            <person name="Tao Y."/>
            <person name="Biddle P."/>
            <person name="Jung M."/>
            <person name="Krespan W."/>
            <person name="Perry M."/>
            <person name="Gordon-Kamm B."/>
            <person name="Liao L."/>
            <person name="Kim S."/>
            <person name="Hendrick C."/>
            <person name="Zhao Z.-Y."/>
            <person name="Dolan M."/>
            <person name="Chumley F."/>
            <person name="Tingey S.V."/>
            <person name="Tomb J.-F."/>
            <person name="Gordon M.P."/>
            <person name="Olson M.V."/>
            <person name="Nester E.W."/>
        </authorList>
    </citation>
    <scope>NUCLEOTIDE SEQUENCE [LARGE SCALE GENOMIC DNA]</scope>
    <source>
        <strain>C58 / ATCC 33970</strain>
    </source>
</reference>
<reference key="2">
    <citation type="journal article" date="2001" name="Science">
        <title>Genome sequence of the plant pathogen and biotechnology agent Agrobacterium tumefaciens C58.</title>
        <authorList>
            <person name="Goodner B."/>
            <person name="Hinkle G."/>
            <person name="Gattung S."/>
            <person name="Miller N."/>
            <person name="Blanchard M."/>
            <person name="Qurollo B."/>
            <person name="Goldman B.S."/>
            <person name="Cao Y."/>
            <person name="Askenazi M."/>
            <person name="Halling C."/>
            <person name="Mullin L."/>
            <person name="Houmiel K."/>
            <person name="Gordon J."/>
            <person name="Vaudin M."/>
            <person name="Iartchouk O."/>
            <person name="Epp A."/>
            <person name="Liu F."/>
            <person name="Wollam C."/>
            <person name="Allinger M."/>
            <person name="Doughty D."/>
            <person name="Scott C."/>
            <person name="Lappas C."/>
            <person name="Markelz B."/>
            <person name="Flanagan C."/>
            <person name="Crowell C."/>
            <person name="Gurson J."/>
            <person name="Lomo C."/>
            <person name="Sear C."/>
            <person name="Strub G."/>
            <person name="Cielo C."/>
            <person name="Slater S."/>
        </authorList>
    </citation>
    <scope>NUCLEOTIDE SEQUENCE [LARGE SCALE GENOMIC DNA]</scope>
    <source>
        <strain>C58 / ATCC 33970</strain>
    </source>
</reference>
<protein>
    <recommendedName>
        <fullName evidence="1">Sulfur carrier protein FdhD</fullName>
    </recommendedName>
</protein>
<comment type="function">
    <text evidence="1">Required for formate dehydrogenase (FDH) activity. Acts as a sulfur carrier protein that transfers sulfur from IscS to the molybdenum cofactor prior to its insertion into FDH.</text>
</comment>
<comment type="subcellular location">
    <subcellularLocation>
        <location evidence="1">Cytoplasm</location>
    </subcellularLocation>
</comment>
<comment type="similarity">
    <text evidence="1">Belongs to the FdhD family.</text>
</comment>
<name>FDHD_AGRFC</name>
<sequence length="271" mass="28474">MIVVSVEASYRRVARTALREGTPATGERAVPEEVPVAFSYGGSTHAVMMASPADLIDFAVGFSLTEGIISMRSEIQAIEVVEAGQGYDVQVDLTDAEADALRARRRHMAGPVGCGLCGIESIEQAVRVVPDLSSVKSSVHGNDIVAAVKALNDAQTLNRETRAVHGAGFYNPREGLLAVREDVGRHNALDKLAGAVVNAGISAQMGIVAVTSRLSVEMVQKTAILGCPVLAAISAPTALAIETADRAGITLVALVRGEDFEIFTRADRIIL</sequence>
<keyword id="KW-0963">Cytoplasm</keyword>
<keyword id="KW-0501">Molybdenum cofactor biosynthesis</keyword>
<keyword id="KW-1185">Reference proteome</keyword>
<proteinExistence type="inferred from homology"/>
<evidence type="ECO:0000255" key="1">
    <source>
        <dbReference type="HAMAP-Rule" id="MF_00187"/>
    </source>
</evidence>
<dbReference type="EMBL" id="AE007869">
    <property type="protein sequence ID" value="AAK88341.2"/>
    <property type="molecule type" value="Genomic_DNA"/>
</dbReference>
<dbReference type="PIR" id="AB2898">
    <property type="entry name" value="AB2898"/>
</dbReference>
<dbReference type="PIR" id="D97673">
    <property type="entry name" value="D97673"/>
</dbReference>
<dbReference type="RefSeq" id="NP_355556.2">
    <property type="nucleotide sequence ID" value="NC_003062.2"/>
</dbReference>
<dbReference type="RefSeq" id="WP_010972442.1">
    <property type="nucleotide sequence ID" value="NC_003062.2"/>
</dbReference>
<dbReference type="SMR" id="Q8UC79"/>
<dbReference type="STRING" id="176299.Atu2619"/>
<dbReference type="EnsemblBacteria" id="AAK88341">
    <property type="protein sequence ID" value="AAK88341"/>
    <property type="gene ID" value="Atu2619"/>
</dbReference>
<dbReference type="GeneID" id="1134657"/>
<dbReference type="KEGG" id="atu:Atu2619"/>
<dbReference type="PATRIC" id="fig|176299.10.peg.2623"/>
<dbReference type="eggNOG" id="COG1526">
    <property type="taxonomic scope" value="Bacteria"/>
</dbReference>
<dbReference type="HOGENOM" id="CLU_056887_2_1_5"/>
<dbReference type="OrthoDB" id="3197277at2"/>
<dbReference type="PhylomeDB" id="Q8UC79"/>
<dbReference type="BioCyc" id="AGRO:ATU2619-MONOMER"/>
<dbReference type="Proteomes" id="UP000000813">
    <property type="component" value="Chromosome circular"/>
</dbReference>
<dbReference type="GO" id="GO:0005737">
    <property type="term" value="C:cytoplasm"/>
    <property type="evidence" value="ECO:0007669"/>
    <property type="project" value="UniProtKB-SubCell"/>
</dbReference>
<dbReference type="GO" id="GO:0097163">
    <property type="term" value="F:sulfur carrier activity"/>
    <property type="evidence" value="ECO:0007669"/>
    <property type="project" value="UniProtKB-UniRule"/>
</dbReference>
<dbReference type="GO" id="GO:0016783">
    <property type="term" value="F:sulfurtransferase activity"/>
    <property type="evidence" value="ECO:0007669"/>
    <property type="project" value="InterPro"/>
</dbReference>
<dbReference type="GO" id="GO:0006777">
    <property type="term" value="P:Mo-molybdopterin cofactor biosynthetic process"/>
    <property type="evidence" value="ECO:0007669"/>
    <property type="project" value="UniProtKB-UniRule"/>
</dbReference>
<dbReference type="Gene3D" id="3.10.20.10">
    <property type="match status" value="1"/>
</dbReference>
<dbReference type="Gene3D" id="3.40.140.10">
    <property type="entry name" value="Cytidine Deaminase, domain 2"/>
    <property type="match status" value="1"/>
</dbReference>
<dbReference type="HAMAP" id="MF_00187">
    <property type="entry name" value="FdhD"/>
    <property type="match status" value="1"/>
</dbReference>
<dbReference type="InterPro" id="IPR016193">
    <property type="entry name" value="Cytidine_deaminase-like"/>
</dbReference>
<dbReference type="InterPro" id="IPR003786">
    <property type="entry name" value="FdhD"/>
</dbReference>
<dbReference type="NCBIfam" id="TIGR00129">
    <property type="entry name" value="fdhD_narQ"/>
    <property type="match status" value="1"/>
</dbReference>
<dbReference type="PANTHER" id="PTHR30592">
    <property type="entry name" value="FORMATE DEHYDROGENASE"/>
    <property type="match status" value="1"/>
</dbReference>
<dbReference type="PANTHER" id="PTHR30592:SF1">
    <property type="entry name" value="SULFUR CARRIER PROTEIN FDHD"/>
    <property type="match status" value="1"/>
</dbReference>
<dbReference type="Pfam" id="PF02634">
    <property type="entry name" value="FdhD-NarQ"/>
    <property type="match status" value="1"/>
</dbReference>
<dbReference type="PIRSF" id="PIRSF015626">
    <property type="entry name" value="FdhD"/>
    <property type="match status" value="1"/>
</dbReference>
<dbReference type="SUPFAM" id="SSF53927">
    <property type="entry name" value="Cytidine deaminase-like"/>
    <property type="match status" value="1"/>
</dbReference>
<organism>
    <name type="scientific">Agrobacterium fabrum (strain C58 / ATCC 33970)</name>
    <name type="common">Agrobacterium tumefaciens (strain C58)</name>
    <dbReference type="NCBI Taxonomy" id="176299"/>
    <lineage>
        <taxon>Bacteria</taxon>
        <taxon>Pseudomonadati</taxon>
        <taxon>Pseudomonadota</taxon>
        <taxon>Alphaproteobacteria</taxon>
        <taxon>Hyphomicrobiales</taxon>
        <taxon>Rhizobiaceae</taxon>
        <taxon>Rhizobium/Agrobacterium group</taxon>
        <taxon>Agrobacterium</taxon>
        <taxon>Agrobacterium tumefaciens complex</taxon>
    </lineage>
</organism>
<feature type="chain" id="PRO_0000152885" description="Sulfur carrier protein FdhD">
    <location>
        <begin position="1"/>
        <end position="271"/>
    </location>
</feature>
<feature type="active site" description="Cysteine persulfide intermediate" evidence="1">
    <location>
        <position position="114"/>
    </location>
</feature>